<dbReference type="EC" id="5.3.4.1" evidence="6 8"/>
<dbReference type="EMBL" id="AB048246">
    <property type="protein sequence ID" value="BAB20629.1"/>
    <property type="molecule type" value="mRNA"/>
</dbReference>
<dbReference type="EMBL" id="AY358640">
    <property type="protein sequence ID" value="AAQ89003.1"/>
    <property type="molecule type" value="mRNA"/>
</dbReference>
<dbReference type="EMBL" id="AK075395">
    <property type="protein sequence ID" value="BAC11593.1"/>
    <property type="molecule type" value="mRNA"/>
</dbReference>
<dbReference type="EMBL" id="AK312905">
    <property type="protein sequence ID" value="BAG35751.1"/>
    <property type="molecule type" value="mRNA"/>
</dbReference>
<dbReference type="EMBL" id="AL080080">
    <property type="protein sequence ID" value="CAB45700.2"/>
    <property type="molecule type" value="mRNA"/>
</dbReference>
<dbReference type="EMBL" id="AL591807">
    <property type="status" value="NOT_ANNOTATED_CDS"/>
    <property type="molecule type" value="Genomic_DNA"/>
</dbReference>
<dbReference type="EMBL" id="CH471078">
    <property type="protein sequence ID" value="EAW65678.1"/>
    <property type="molecule type" value="Genomic_DNA"/>
</dbReference>
<dbReference type="EMBL" id="BC036460">
    <property type="protein sequence ID" value="AAH36460.1"/>
    <property type="molecule type" value="mRNA"/>
</dbReference>
<dbReference type="EMBL" id="BC056874">
    <property type="protein sequence ID" value="AAH56874.2"/>
    <property type="molecule type" value="mRNA"/>
</dbReference>
<dbReference type="CCDS" id="CCDS41953.1"/>
<dbReference type="PIR" id="T12471">
    <property type="entry name" value="T12471"/>
</dbReference>
<dbReference type="RefSeq" id="NP_110382.3">
    <property type="nucleotide sequence ID" value="NM_030755.4"/>
</dbReference>
<dbReference type="PDB" id="1X5E">
    <property type="method" value="NMR"/>
    <property type="chains" value="A=30-142"/>
</dbReference>
<dbReference type="PDBsum" id="1X5E"/>
<dbReference type="SMR" id="Q9H3N1"/>
<dbReference type="BioGRID" id="123510">
    <property type="interactions" value="254"/>
</dbReference>
<dbReference type="FunCoup" id="Q9H3N1">
    <property type="interactions" value="2403"/>
</dbReference>
<dbReference type="IntAct" id="Q9H3N1">
    <property type="interactions" value="118"/>
</dbReference>
<dbReference type="MINT" id="Q9H3N1"/>
<dbReference type="STRING" id="9606.ENSP00000393316"/>
<dbReference type="ChEMBL" id="CHEMBL4295941"/>
<dbReference type="TCDB" id="8.A.88.2.5">
    <property type="family name" value="the calciquestrin (casq) family"/>
</dbReference>
<dbReference type="GlyGen" id="Q9H3N1">
    <property type="glycosylation" value="1 site, 1 O-linked glycan (1 site)"/>
</dbReference>
<dbReference type="iPTMnet" id="Q9H3N1"/>
<dbReference type="PhosphoSitePlus" id="Q9H3N1"/>
<dbReference type="SwissPalm" id="Q9H3N1"/>
<dbReference type="BioMuta" id="TMX1"/>
<dbReference type="DMDM" id="47117631"/>
<dbReference type="jPOST" id="Q9H3N1"/>
<dbReference type="MassIVE" id="Q9H3N1"/>
<dbReference type="PaxDb" id="9606-ENSP00000393316"/>
<dbReference type="PeptideAtlas" id="Q9H3N1"/>
<dbReference type="ProteomicsDB" id="80733"/>
<dbReference type="Pumba" id="Q9H3N1"/>
<dbReference type="TopDownProteomics" id="Q9H3N1"/>
<dbReference type="Antibodypedia" id="163">
    <property type="antibodies" value="303 antibodies from 32 providers"/>
</dbReference>
<dbReference type="DNASU" id="81542"/>
<dbReference type="Ensembl" id="ENST00000457354.7">
    <property type="protein sequence ID" value="ENSP00000393316.2"/>
    <property type="gene ID" value="ENSG00000139921.13"/>
</dbReference>
<dbReference type="GeneID" id="81542"/>
<dbReference type="KEGG" id="hsa:81542"/>
<dbReference type="MANE-Select" id="ENST00000457354.7">
    <property type="protein sequence ID" value="ENSP00000393316.2"/>
    <property type="RefSeq nucleotide sequence ID" value="NM_030755.5"/>
    <property type="RefSeq protein sequence ID" value="NP_110382.3"/>
</dbReference>
<dbReference type="UCSC" id="uc001wza.5">
    <property type="organism name" value="human"/>
</dbReference>
<dbReference type="AGR" id="HGNC:15487"/>
<dbReference type="CTD" id="81542"/>
<dbReference type="DisGeNET" id="81542"/>
<dbReference type="GeneCards" id="TMX1"/>
<dbReference type="HGNC" id="HGNC:15487">
    <property type="gene designation" value="TMX1"/>
</dbReference>
<dbReference type="HPA" id="ENSG00000139921">
    <property type="expression patterns" value="Low tissue specificity"/>
</dbReference>
<dbReference type="MIM" id="610527">
    <property type="type" value="gene"/>
</dbReference>
<dbReference type="neXtProt" id="NX_Q9H3N1"/>
<dbReference type="OpenTargets" id="ENSG00000139921"/>
<dbReference type="PharmGKB" id="PA37968"/>
<dbReference type="VEuPathDB" id="HostDB:ENSG00000139921"/>
<dbReference type="eggNOG" id="KOG0913">
    <property type="taxonomic scope" value="Eukaryota"/>
</dbReference>
<dbReference type="GeneTree" id="ENSGT00940000155959"/>
<dbReference type="HOGENOM" id="CLU_069292_2_1_1"/>
<dbReference type="InParanoid" id="Q9H3N1"/>
<dbReference type="OMA" id="FRQYKGS"/>
<dbReference type="OrthoDB" id="7869097at2759"/>
<dbReference type="PAN-GO" id="Q9H3N1">
    <property type="GO annotations" value="2 GO annotations based on evolutionary models"/>
</dbReference>
<dbReference type="PhylomeDB" id="Q9H3N1"/>
<dbReference type="TreeFam" id="TF106376"/>
<dbReference type="PathwayCommons" id="Q9H3N1"/>
<dbReference type="SignaLink" id="Q9H3N1"/>
<dbReference type="BioGRID-ORCS" id="81542">
    <property type="hits" value="20 hits in 1154 CRISPR screens"/>
</dbReference>
<dbReference type="ChiTaRS" id="TMX1">
    <property type="organism name" value="human"/>
</dbReference>
<dbReference type="EvolutionaryTrace" id="Q9H3N1"/>
<dbReference type="GeneWiki" id="TMX1"/>
<dbReference type="GenomeRNAi" id="81542"/>
<dbReference type="Pharos" id="Q9H3N1">
    <property type="development level" value="Tbio"/>
</dbReference>
<dbReference type="PRO" id="PR:Q9H3N1"/>
<dbReference type="Proteomes" id="UP000005640">
    <property type="component" value="Chromosome 14"/>
</dbReference>
<dbReference type="RNAct" id="Q9H3N1">
    <property type="molecule type" value="protein"/>
</dbReference>
<dbReference type="Bgee" id="ENSG00000139921">
    <property type="expression patterns" value="Expressed in tibia and 218 other cell types or tissues"/>
</dbReference>
<dbReference type="ExpressionAtlas" id="Q9H3N1">
    <property type="expression patterns" value="baseline and differential"/>
</dbReference>
<dbReference type="GO" id="GO:0012505">
    <property type="term" value="C:endomembrane system"/>
    <property type="evidence" value="ECO:0000318"/>
    <property type="project" value="GO_Central"/>
</dbReference>
<dbReference type="GO" id="GO:0005789">
    <property type="term" value="C:endoplasmic reticulum membrane"/>
    <property type="evidence" value="ECO:0000314"/>
    <property type="project" value="UniProtKB"/>
</dbReference>
<dbReference type="GO" id="GO:0005576">
    <property type="term" value="C:extracellular region"/>
    <property type="evidence" value="ECO:0007669"/>
    <property type="project" value="UniProtKB-SubCell"/>
</dbReference>
<dbReference type="GO" id="GO:0044233">
    <property type="term" value="C:mitochondria-associated endoplasmic reticulum membrane contact site"/>
    <property type="evidence" value="ECO:0000314"/>
    <property type="project" value="UniProtKB"/>
</dbReference>
<dbReference type="GO" id="GO:0031966">
    <property type="term" value="C:mitochondrial membrane"/>
    <property type="evidence" value="ECO:0007669"/>
    <property type="project" value="UniProtKB-SubCell"/>
</dbReference>
<dbReference type="GO" id="GO:0015036">
    <property type="term" value="F:disulfide oxidoreductase activity"/>
    <property type="evidence" value="ECO:0000314"/>
    <property type="project" value="UniProtKB"/>
</dbReference>
<dbReference type="GO" id="GO:0004857">
    <property type="term" value="F:enzyme inhibitor activity"/>
    <property type="evidence" value="ECO:0000314"/>
    <property type="project" value="UniProtKB"/>
</dbReference>
<dbReference type="GO" id="GO:0003756">
    <property type="term" value="F:protein disulfide isomerase activity"/>
    <property type="evidence" value="ECO:0000314"/>
    <property type="project" value="UniProtKB"/>
</dbReference>
<dbReference type="GO" id="GO:0015035">
    <property type="term" value="F:protein-disulfide reductase activity"/>
    <property type="evidence" value="ECO:0000314"/>
    <property type="project" value="UniProtKB"/>
</dbReference>
<dbReference type="GO" id="GO:0090331">
    <property type="term" value="P:negative regulation of platelet aggregation"/>
    <property type="evidence" value="ECO:0000314"/>
    <property type="project" value="UniProtKB"/>
</dbReference>
<dbReference type="GO" id="GO:0010868">
    <property type="term" value="P:negative regulation of triglyceride biosynthetic process"/>
    <property type="evidence" value="ECO:0000314"/>
    <property type="project" value="UniProtKB"/>
</dbReference>
<dbReference type="GO" id="GO:1904294">
    <property type="term" value="P:positive regulation of ERAD pathway"/>
    <property type="evidence" value="ECO:0000314"/>
    <property type="project" value="UniProtKB"/>
</dbReference>
<dbReference type="GO" id="GO:0051924">
    <property type="term" value="P:regulation of calcium ion transport"/>
    <property type="evidence" value="ECO:0000314"/>
    <property type="project" value="UniProtKB"/>
</dbReference>
<dbReference type="GO" id="GO:0034976">
    <property type="term" value="P:response to endoplasmic reticulum stress"/>
    <property type="evidence" value="ECO:0000315"/>
    <property type="project" value="UniProtKB"/>
</dbReference>
<dbReference type="CDD" id="cd02994">
    <property type="entry name" value="PDI_a_TMX"/>
    <property type="match status" value="1"/>
</dbReference>
<dbReference type="FunFam" id="3.40.30.10:FF:000117">
    <property type="entry name" value="thioredoxin-related transmembrane protein 1"/>
    <property type="match status" value="1"/>
</dbReference>
<dbReference type="Gene3D" id="3.40.30.10">
    <property type="entry name" value="Glutaredoxin"/>
    <property type="match status" value="1"/>
</dbReference>
<dbReference type="InterPro" id="IPR036249">
    <property type="entry name" value="Thioredoxin-like_sf"/>
</dbReference>
<dbReference type="InterPro" id="IPR017937">
    <property type="entry name" value="Thioredoxin_CS"/>
</dbReference>
<dbReference type="InterPro" id="IPR013766">
    <property type="entry name" value="Thioredoxin_domain"/>
</dbReference>
<dbReference type="InterPro" id="IPR052454">
    <property type="entry name" value="TMX_domain-containing"/>
</dbReference>
<dbReference type="PANTHER" id="PTHR46107">
    <property type="entry name" value="DUMPY: SHORTER THAN WILD-TYPE"/>
    <property type="match status" value="1"/>
</dbReference>
<dbReference type="PANTHER" id="PTHR46107:SF2">
    <property type="entry name" value="THIOREDOXIN-RELATED TRANSMEMBRANE PROTEIN 1"/>
    <property type="match status" value="1"/>
</dbReference>
<dbReference type="Pfam" id="PF00085">
    <property type="entry name" value="Thioredoxin"/>
    <property type="match status" value="1"/>
</dbReference>
<dbReference type="SUPFAM" id="SSF52833">
    <property type="entry name" value="Thioredoxin-like"/>
    <property type="match status" value="1"/>
</dbReference>
<dbReference type="PROSITE" id="PS00194">
    <property type="entry name" value="THIOREDOXIN_1"/>
    <property type="match status" value="1"/>
</dbReference>
<dbReference type="PROSITE" id="PS51352">
    <property type="entry name" value="THIOREDOXIN_2"/>
    <property type="match status" value="1"/>
</dbReference>
<organism>
    <name type="scientific">Homo sapiens</name>
    <name type="common">Human</name>
    <dbReference type="NCBI Taxonomy" id="9606"/>
    <lineage>
        <taxon>Eukaryota</taxon>
        <taxon>Metazoa</taxon>
        <taxon>Chordata</taxon>
        <taxon>Craniata</taxon>
        <taxon>Vertebrata</taxon>
        <taxon>Euteleostomi</taxon>
        <taxon>Mammalia</taxon>
        <taxon>Eutheria</taxon>
        <taxon>Euarchontoglires</taxon>
        <taxon>Primates</taxon>
        <taxon>Haplorrhini</taxon>
        <taxon>Catarrhini</taxon>
        <taxon>Hominidae</taxon>
        <taxon>Homo</taxon>
    </lineage>
</organism>
<proteinExistence type="evidence at protein level"/>
<accession>Q9H3N1</accession>
<accession>B2R7A4</accession>
<accession>Q8N487</accession>
<accession>Q8NBN5</accession>
<accession>Q9Y4T6</accession>
<feature type="signal peptide" evidence="1">
    <location>
        <begin position="1"/>
        <end position="26"/>
    </location>
</feature>
<feature type="chain" id="PRO_0000034153" description="Thioredoxin-related transmembrane protein 1">
    <location>
        <begin position="27"/>
        <end position="280"/>
    </location>
</feature>
<feature type="topological domain" description="Extracellular" evidence="1">
    <location>
        <begin position="27"/>
        <end position="180"/>
    </location>
</feature>
<feature type="transmembrane region" description="Helical" evidence="1">
    <location>
        <begin position="181"/>
        <end position="203"/>
    </location>
</feature>
<feature type="topological domain" description="Cytoplasmic" evidence="1">
    <location>
        <begin position="204"/>
        <end position="280"/>
    </location>
</feature>
<feature type="domain" description="Thioredoxin" evidence="2">
    <location>
        <begin position="27"/>
        <end position="132"/>
    </location>
</feature>
<feature type="region of interest" description="Disordered" evidence="3">
    <location>
        <begin position="218"/>
        <end position="280"/>
    </location>
</feature>
<feature type="compositionally biased region" description="Acidic residues" evidence="3">
    <location>
        <begin position="237"/>
        <end position="252"/>
    </location>
</feature>
<feature type="active site" description="Nucleophile" evidence="4 11">
    <location>
        <position position="56"/>
    </location>
</feature>
<feature type="active site" description="Nucleophile" evidence="4 11">
    <location>
        <position position="59"/>
    </location>
</feature>
<feature type="modified residue" description="Phosphoserine" evidence="28">
    <location>
        <position position="228"/>
    </location>
</feature>
<feature type="modified residue" description="Phosphoserine" evidence="20 21 22 23 24 25 26 27 28">
    <location>
        <position position="247"/>
    </location>
</feature>
<feature type="modified residue" description="Phosphoserine" evidence="23 25 26 27 28">
    <location>
        <position position="270"/>
    </location>
</feature>
<feature type="modified residue" description="Phosphoserine" evidence="28">
    <location>
        <position position="274"/>
    </location>
</feature>
<feature type="modified residue" description="Phosphoserine" evidence="23 26 28">
    <location>
        <position position="280"/>
    </location>
</feature>
<feature type="lipid moiety-binding region" description="S-palmitoyl cysteine" evidence="16 17">
    <location>
        <position position="205"/>
    </location>
</feature>
<feature type="lipid moiety-binding region" description="S-palmitoyl cysteine" evidence="16 17">
    <location>
        <position position="207"/>
    </location>
</feature>
<feature type="disulfide bond" description="Redox-active" evidence="2 4">
    <location>
        <begin position="56"/>
        <end position="59"/>
    </location>
</feature>
<feature type="mutagenesis site" description="Loss of reductase activity and ability to inhibit TMEM68/DIESL; when associated with S-59." evidence="4 11">
    <original>C</original>
    <variation>S</variation>
    <location>
        <position position="56"/>
    </location>
</feature>
<feature type="mutagenesis site" description="Loss of reductase activity and ability to inhibit TMEM68/DIESL; when associated with S-56." evidence="4 11">
    <original>C</original>
    <variation>S</variation>
    <location>
        <position position="59"/>
    </location>
</feature>
<feature type="mutagenesis site" description="Abolished palmitoylation, leading to decreased localization to mitochondria-associated endoplasmic reticulum membrane (MAM)." evidence="5 7">
    <original>CLC</original>
    <variation>ALA</variation>
    <location>
        <begin position="205"/>
        <end position="207"/>
    </location>
</feature>
<feature type="sequence conflict" description="In Ref. 8; AAH36460." evidence="15" ref="8">
    <original>LVL</original>
    <variation>MVP</variation>
    <location>
        <begin position="14"/>
        <end position="16"/>
    </location>
</feature>
<feature type="sequence conflict" description="In Ref. 8; AAH36460." evidence="15" ref="8">
    <original>T</original>
    <variation>N</variation>
    <location>
        <position position="98"/>
    </location>
</feature>
<feature type="sequence conflict" description="In Ref. 4; BAC11593." evidence="15" ref="4">
    <original>V</original>
    <variation>A</variation>
    <location>
        <position position="177"/>
    </location>
</feature>
<feature type="strand" evidence="29">
    <location>
        <begin position="30"/>
        <end position="33"/>
    </location>
</feature>
<feature type="turn" evidence="29">
    <location>
        <begin position="36"/>
        <end position="38"/>
    </location>
</feature>
<feature type="helix" evidence="29">
    <location>
        <begin position="39"/>
        <end position="42"/>
    </location>
</feature>
<feature type="strand" evidence="29">
    <location>
        <begin position="44"/>
        <end position="52"/>
    </location>
</feature>
<feature type="helix" evidence="29">
    <location>
        <begin position="57"/>
        <end position="73"/>
    </location>
</feature>
<feature type="helix" evidence="29">
    <location>
        <begin position="74"/>
        <end position="76"/>
    </location>
</feature>
<feature type="strand" evidence="29">
    <location>
        <begin position="79"/>
        <end position="84"/>
    </location>
</feature>
<feature type="turn" evidence="29">
    <location>
        <begin position="85"/>
        <end position="87"/>
    </location>
</feature>
<feature type="helix" evidence="29">
    <location>
        <begin position="89"/>
        <end position="94"/>
    </location>
</feature>
<feature type="strand" evidence="29">
    <location>
        <begin position="99"/>
        <end position="107"/>
    </location>
</feature>
<feature type="strand" evidence="29">
    <location>
        <begin position="110"/>
        <end position="113"/>
    </location>
</feature>
<feature type="helix" evidence="29">
    <location>
        <begin position="120"/>
        <end position="128"/>
    </location>
</feature>
<feature type="helix" evidence="29">
    <location>
        <begin position="131"/>
        <end position="134"/>
    </location>
</feature>
<gene>
    <name evidence="13 19" type="primary">TMX1</name>
    <name evidence="12" type="synonym">TMX</name>
    <name type="synonym">TXNDC</name>
    <name type="synonym">TXNDC1</name>
    <name type="ORF">PSEC0085</name>
    <name type="ORF">UNQ235/PRO268</name>
</gene>
<comment type="function">
    <text evidence="4 6 7 8 9 10 11">Thiredoxin domain-containing protein that participates in various redox reactions through the reversible oxidation of its active center dithiol to a disulfide and catalyze dithiol-disulfide exchange reactions (PubMed:11152479, PubMed:37648867). Acts as a key inhibitor of the alternative triglyceride biosynthesis pathway by inhibiting the activity of TMEM68/DIESL at the endoplasmic reticulum, thereby restricting accumulation of triacylglycerol (PubMed:37648867). The alternative triglyceride biosynthesis pathway mediates formation of triacylglycerol from diacylglycerol and membrane phospholipids (PubMed:37648867). Acts as a protein disulfide isomerase by catalyzing formation or reduction of disulfide bonds (PubMed:22228764, PubMed:29932915). Specifically mediates formation of disulfide bonds of transmembrane proteins at the endoplasmic reticulum membrane (PubMed:22228764). Involved in endoplasmic reticulum-associated degradation (ERAD) via its protein disulfide isomerase activity by acting on folding-defective polypeptides at the endoplasmic reticulum membrane (PubMed:29932915). Acts as a negative regulator of platelet aggregation following secretion in the extracellular space (PubMed:30425049). Acts as a regulator of endoplasmic reticulum-mitochondria contact sites via its ability to regulate redox signals (PubMed:27502484, PubMed:31304984). Regulates endoplasmic reticulum-mitochondria Ca(2+) flux (PubMed:27502484).</text>
</comment>
<comment type="catalytic activity">
    <reaction evidence="6 8">
        <text>Catalyzes the rearrangement of -S-S- bonds in proteins.</text>
        <dbReference type="EC" id="5.3.4.1"/>
    </reaction>
</comment>
<comment type="subunit">
    <text evidence="7">Interacts with ATP2A2.</text>
</comment>
<comment type="interaction">
    <interactant intactId="EBI-1051115">
        <id>Q9H3N1</id>
    </interactant>
    <interactant intactId="EBI-707714">
        <id>Q92843</id>
        <label>BCL2L2</label>
    </interactant>
    <organismsDiffer>false</organismsDiffer>
    <experiments>3</experiments>
</comment>
<comment type="interaction">
    <interactant intactId="EBI-1051115">
        <id>Q9H3N1</id>
    </interactant>
    <interactant intactId="EBI-608322">
        <id>P32246</id>
        <label>CCR1</label>
    </interactant>
    <organismsDiffer>false</organismsDiffer>
    <experiments>3</experiments>
</comment>
<comment type="interaction">
    <interactant intactId="EBI-1051115">
        <id>Q9H3N1</id>
    </interactant>
    <interactant intactId="EBI-724839">
        <id>Q14318</id>
        <label>FKBP8</label>
    </interactant>
    <organismsDiffer>false</organismsDiffer>
    <experiments>3</experiments>
</comment>
<comment type="interaction">
    <interactant intactId="EBI-1051115">
        <id>Q9H3N1</id>
    </interactant>
    <interactant intactId="EBI-2515857">
        <id>O43681</id>
        <label>GET3</label>
    </interactant>
    <organismsDiffer>false</organismsDiffer>
    <experiments>3</experiments>
</comment>
<comment type="interaction">
    <interactant intactId="EBI-1051115">
        <id>Q9H3N1</id>
    </interactant>
    <interactant intactId="EBI-11991950">
        <id>Q8WWP7</id>
        <label>GIMAP1</label>
    </interactant>
    <organismsDiffer>false</organismsDiffer>
    <experiments>3</experiments>
</comment>
<comment type="interaction">
    <interactant intactId="EBI-1051115">
        <id>Q9H3N1</id>
    </interactant>
    <interactant intactId="EBI-6166686">
        <id>Q96F15</id>
        <label>GIMAP5</label>
    </interactant>
    <organismsDiffer>false</organismsDiffer>
    <experiments>3</experiments>
</comment>
<comment type="interaction">
    <interactant intactId="EBI-1051115">
        <id>Q9H3N1</id>
    </interactant>
    <interactant intactId="EBI-2820517">
        <id>Q8TAF8</id>
        <label>LHFPL5</label>
    </interactant>
    <organismsDiffer>false</organismsDiffer>
    <experiments>3</experiments>
</comment>
<comment type="interaction">
    <interactant intactId="EBI-1051115">
        <id>Q9H3N1</id>
    </interactant>
    <interactant intactId="EBI-2845982">
        <id>Q01453</id>
        <label>PMP22</label>
    </interactant>
    <organismsDiffer>false</organismsDiffer>
    <experiments>3</experiments>
</comment>
<comment type="interaction">
    <interactant intactId="EBI-1051115">
        <id>Q9H3N1</id>
    </interactant>
    <interactant intactId="EBI-990792">
        <id>P00441</id>
        <label>SOD1</label>
    </interactant>
    <organismsDiffer>false</organismsDiffer>
    <experiments>3</experiments>
</comment>
<comment type="subcellular location">
    <subcellularLocation>
        <location evidence="4 5 7 10 11">Endoplasmic reticulum membrane</location>
        <topology evidence="1">Single-pass type I membrane protein</topology>
    </subcellularLocation>
    <subcellularLocation>
        <location evidence="5 7 10">Mitochondrion membrane</location>
        <topology evidence="1">Single-pass type I membrane protein</topology>
    </subcellularLocation>
    <subcellularLocation>
        <location evidence="18">Secreted</location>
    </subcellularLocation>
    <text evidence="4 5 7 9 10">Predominantly found in the endoplasmic reticulum (PubMed:11152479). Secreted in the extracellular space following thrombin stimulation (PubMed:30425049). Localizes to mitochondria-associated endoplasmic reticulum membrane (MAM); palmitoylation is required for MAM localization (PubMed:22045338, PubMed:27502484, PubMed:31304984).</text>
</comment>
<comment type="tissue specificity">
    <text evidence="4">Ubiquitous (PubMed:11152479). Highly expressed in kidney, liver, placenta and lung (PubMed:11152479).</text>
</comment>
<comment type="PTM">
    <text evidence="5 7">Palmitoylated; palmitoylation is required for localization to mitochondria-associated endoplasmic reticulum membrane (MAM).</text>
</comment>
<comment type="miscellaneous">
    <text evidence="6">Mediates reduction of intermolecular disulfide bonds between chain A and B of Ricin toxin (Ricin A chain and Ricin B chain, respectively), thereby releasing and activating Ricin A chain.</text>
</comment>
<protein>
    <recommendedName>
        <fullName evidence="15">Thioredoxin-related transmembrane protein 1</fullName>
    </recommendedName>
    <alternativeName>
        <fullName evidence="15">Protein disulfide-isomerase TMX1</fullName>
        <ecNumber evidence="6 8">5.3.4.1</ecNumber>
    </alternativeName>
    <alternativeName>
        <fullName>Thioredoxin domain-containing protein 1</fullName>
    </alternativeName>
    <alternativeName>
        <fullName evidence="14">Transmembrane Trx-related protein</fullName>
    </alternativeName>
</protein>
<reference key="1">
    <citation type="journal article" date="2001" name="J. Biol. Chem.">
        <title>Identification of a novel thioredoxin-related transmembrane protein.</title>
        <authorList>
            <person name="Matsuo Y."/>
            <person name="Akiyama N."/>
            <person name="Nakamura H."/>
            <person name="Yodoi J."/>
            <person name="Noda M."/>
            <person name="Kizaka-Kondoh S."/>
        </authorList>
    </citation>
    <scope>NUCLEOTIDE SEQUENCE [MRNA]</scope>
    <scope>FUNCTION</scope>
    <scope>SUBCELLULAR LOCATION</scope>
    <scope>ACTIVE SITES</scope>
    <scope>TISSUE SPECIFICITY</scope>
    <scope>DISULFIDE BOND</scope>
    <scope>MUTAGENESIS OF CYS-56 AND CYS-59</scope>
</reference>
<reference key="2">
    <citation type="journal article" date="2003" name="Genome Res.">
        <title>The secreted protein discovery initiative (SPDI), a large-scale effort to identify novel human secreted and transmembrane proteins: a bioinformatics assessment.</title>
        <authorList>
            <person name="Clark H.F."/>
            <person name="Gurney A.L."/>
            <person name="Abaya E."/>
            <person name="Baker K."/>
            <person name="Baldwin D.T."/>
            <person name="Brush J."/>
            <person name="Chen J."/>
            <person name="Chow B."/>
            <person name="Chui C."/>
            <person name="Crowley C."/>
            <person name="Currell B."/>
            <person name="Deuel B."/>
            <person name="Dowd P."/>
            <person name="Eaton D."/>
            <person name="Foster J.S."/>
            <person name="Grimaldi C."/>
            <person name="Gu Q."/>
            <person name="Hass P.E."/>
            <person name="Heldens S."/>
            <person name="Huang A."/>
            <person name="Kim H.S."/>
            <person name="Klimowski L."/>
            <person name="Jin Y."/>
            <person name="Johnson S."/>
            <person name="Lee J."/>
            <person name="Lewis L."/>
            <person name="Liao D."/>
            <person name="Mark M.R."/>
            <person name="Robbie E."/>
            <person name="Sanchez C."/>
            <person name="Schoenfeld J."/>
            <person name="Seshagiri S."/>
            <person name="Simmons L."/>
            <person name="Singh J."/>
            <person name="Smith V."/>
            <person name="Stinson J."/>
            <person name="Vagts A."/>
            <person name="Vandlen R.L."/>
            <person name="Watanabe C."/>
            <person name="Wieand D."/>
            <person name="Woods K."/>
            <person name="Xie M.-H."/>
            <person name="Yansura D.G."/>
            <person name="Yi S."/>
            <person name="Yu G."/>
            <person name="Yuan J."/>
            <person name="Zhang M."/>
            <person name="Zhang Z."/>
            <person name="Goddard A.D."/>
            <person name="Wood W.I."/>
            <person name="Godowski P.J."/>
            <person name="Gray A.M."/>
        </authorList>
    </citation>
    <scope>NUCLEOTIDE SEQUENCE [LARGE SCALE MRNA]</scope>
</reference>
<reference key="3">
    <citation type="journal article" date="2004" name="Nat. Genet.">
        <title>Complete sequencing and characterization of 21,243 full-length human cDNAs.</title>
        <authorList>
            <person name="Ota T."/>
            <person name="Suzuki Y."/>
            <person name="Nishikawa T."/>
            <person name="Otsuki T."/>
            <person name="Sugiyama T."/>
            <person name="Irie R."/>
            <person name="Wakamatsu A."/>
            <person name="Hayashi K."/>
            <person name="Sato H."/>
            <person name="Nagai K."/>
            <person name="Kimura K."/>
            <person name="Makita H."/>
            <person name="Sekine M."/>
            <person name="Obayashi M."/>
            <person name="Nishi T."/>
            <person name="Shibahara T."/>
            <person name="Tanaka T."/>
            <person name="Ishii S."/>
            <person name="Yamamoto J."/>
            <person name="Saito K."/>
            <person name="Kawai Y."/>
            <person name="Isono Y."/>
            <person name="Nakamura Y."/>
            <person name="Nagahari K."/>
            <person name="Murakami K."/>
            <person name="Yasuda T."/>
            <person name="Iwayanagi T."/>
            <person name="Wagatsuma M."/>
            <person name="Shiratori A."/>
            <person name="Sudo H."/>
            <person name="Hosoiri T."/>
            <person name="Kaku Y."/>
            <person name="Kodaira H."/>
            <person name="Kondo H."/>
            <person name="Sugawara M."/>
            <person name="Takahashi M."/>
            <person name="Kanda K."/>
            <person name="Yokoi T."/>
            <person name="Furuya T."/>
            <person name="Kikkawa E."/>
            <person name="Omura Y."/>
            <person name="Abe K."/>
            <person name="Kamihara K."/>
            <person name="Katsuta N."/>
            <person name="Sato K."/>
            <person name="Tanikawa M."/>
            <person name="Yamazaki M."/>
            <person name="Ninomiya K."/>
            <person name="Ishibashi T."/>
            <person name="Yamashita H."/>
            <person name="Murakawa K."/>
            <person name="Fujimori K."/>
            <person name="Tanai H."/>
            <person name="Kimata M."/>
            <person name="Watanabe M."/>
            <person name="Hiraoka S."/>
            <person name="Chiba Y."/>
            <person name="Ishida S."/>
            <person name="Ono Y."/>
            <person name="Takiguchi S."/>
            <person name="Watanabe S."/>
            <person name="Yosida M."/>
            <person name="Hotuta T."/>
            <person name="Kusano J."/>
            <person name="Kanehori K."/>
            <person name="Takahashi-Fujii A."/>
            <person name="Hara H."/>
            <person name="Tanase T.-O."/>
            <person name="Nomura Y."/>
            <person name="Togiya S."/>
            <person name="Komai F."/>
            <person name="Hara R."/>
            <person name="Takeuchi K."/>
            <person name="Arita M."/>
            <person name="Imose N."/>
            <person name="Musashino K."/>
            <person name="Yuuki H."/>
            <person name="Oshima A."/>
            <person name="Sasaki N."/>
            <person name="Aotsuka S."/>
            <person name="Yoshikawa Y."/>
            <person name="Matsunawa H."/>
            <person name="Ichihara T."/>
            <person name="Shiohata N."/>
            <person name="Sano S."/>
            <person name="Moriya S."/>
            <person name="Momiyama H."/>
            <person name="Satoh N."/>
            <person name="Takami S."/>
            <person name="Terashima Y."/>
            <person name="Suzuki O."/>
            <person name="Nakagawa S."/>
            <person name="Senoh A."/>
            <person name="Mizoguchi H."/>
            <person name="Goto Y."/>
            <person name="Shimizu F."/>
            <person name="Wakebe H."/>
            <person name="Hishigaki H."/>
            <person name="Watanabe T."/>
            <person name="Sugiyama A."/>
            <person name="Takemoto M."/>
            <person name="Kawakami B."/>
            <person name="Yamazaki M."/>
            <person name="Watanabe K."/>
            <person name="Kumagai A."/>
            <person name="Itakura S."/>
            <person name="Fukuzumi Y."/>
            <person name="Fujimori Y."/>
            <person name="Komiyama M."/>
            <person name="Tashiro H."/>
            <person name="Tanigami A."/>
            <person name="Fujiwara T."/>
            <person name="Ono T."/>
            <person name="Yamada K."/>
            <person name="Fujii Y."/>
            <person name="Ozaki K."/>
            <person name="Hirao M."/>
            <person name="Ohmori Y."/>
            <person name="Kawabata A."/>
            <person name="Hikiji T."/>
            <person name="Kobatake N."/>
            <person name="Inagaki H."/>
            <person name="Ikema Y."/>
            <person name="Okamoto S."/>
            <person name="Okitani R."/>
            <person name="Kawakami T."/>
            <person name="Noguchi S."/>
            <person name="Itoh T."/>
            <person name="Shigeta K."/>
            <person name="Senba T."/>
            <person name="Matsumura K."/>
            <person name="Nakajima Y."/>
            <person name="Mizuno T."/>
            <person name="Morinaga M."/>
            <person name="Sasaki M."/>
            <person name="Togashi T."/>
            <person name="Oyama M."/>
            <person name="Hata H."/>
            <person name="Watanabe M."/>
            <person name="Komatsu T."/>
            <person name="Mizushima-Sugano J."/>
            <person name="Satoh T."/>
            <person name="Shirai Y."/>
            <person name="Takahashi Y."/>
            <person name="Nakagawa K."/>
            <person name="Okumura K."/>
            <person name="Nagase T."/>
            <person name="Nomura N."/>
            <person name="Kikuchi H."/>
            <person name="Masuho Y."/>
            <person name="Yamashita R."/>
            <person name="Nakai K."/>
            <person name="Yada T."/>
            <person name="Nakamura Y."/>
            <person name="Ohara O."/>
            <person name="Isogai T."/>
            <person name="Sugano S."/>
        </authorList>
    </citation>
    <scope>NUCLEOTIDE SEQUENCE [LARGE SCALE MRNA]</scope>
    <source>
        <tissue>Subthalamic nucleus</tissue>
    </source>
</reference>
<reference key="4">
    <citation type="journal article" date="2005" name="DNA Res.">
        <title>Signal sequence and keyword trap in silico for selection of full-length human cDNAs encoding secretion or membrane proteins from oligo-capped cDNA libraries.</title>
        <authorList>
            <person name="Otsuki T."/>
            <person name="Ota T."/>
            <person name="Nishikawa T."/>
            <person name="Hayashi K."/>
            <person name="Suzuki Y."/>
            <person name="Yamamoto J."/>
            <person name="Wakamatsu A."/>
            <person name="Kimura K."/>
            <person name="Sakamoto K."/>
            <person name="Hatano N."/>
            <person name="Kawai Y."/>
            <person name="Ishii S."/>
            <person name="Saito K."/>
            <person name="Kojima S."/>
            <person name="Sugiyama T."/>
            <person name="Ono T."/>
            <person name="Okano K."/>
            <person name="Yoshikawa Y."/>
            <person name="Aotsuka S."/>
            <person name="Sasaki N."/>
            <person name="Hattori A."/>
            <person name="Okumura K."/>
            <person name="Nagai K."/>
            <person name="Sugano S."/>
            <person name="Isogai T."/>
        </authorList>
    </citation>
    <scope>NUCLEOTIDE SEQUENCE [LARGE SCALE MRNA]</scope>
    <source>
        <tissue>Teratocarcinoma</tissue>
    </source>
</reference>
<reference key="5">
    <citation type="journal article" date="2007" name="BMC Genomics">
        <title>The full-ORF clone resource of the German cDNA consortium.</title>
        <authorList>
            <person name="Bechtel S."/>
            <person name="Rosenfelder H."/>
            <person name="Duda A."/>
            <person name="Schmidt C.P."/>
            <person name="Ernst U."/>
            <person name="Wellenreuther R."/>
            <person name="Mehrle A."/>
            <person name="Schuster C."/>
            <person name="Bahr A."/>
            <person name="Bloecker H."/>
            <person name="Heubner D."/>
            <person name="Hoerlein A."/>
            <person name="Michel G."/>
            <person name="Wedler H."/>
            <person name="Koehrer K."/>
            <person name="Ottenwaelder B."/>
            <person name="Poustka A."/>
            <person name="Wiemann S."/>
            <person name="Schupp I."/>
        </authorList>
    </citation>
    <scope>NUCLEOTIDE SEQUENCE [LARGE SCALE MRNA]</scope>
    <source>
        <tissue>Brain</tissue>
    </source>
</reference>
<reference key="6">
    <citation type="journal article" date="2003" name="Nature">
        <title>The DNA sequence and analysis of human chromosome 14.</title>
        <authorList>
            <person name="Heilig R."/>
            <person name="Eckenberg R."/>
            <person name="Petit J.-L."/>
            <person name="Fonknechten N."/>
            <person name="Da Silva C."/>
            <person name="Cattolico L."/>
            <person name="Levy M."/>
            <person name="Barbe V."/>
            <person name="De Berardinis V."/>
            <person name="Ureta-Vidal A."/>
            <person name="Pelletier E."/>
            <person name="Vico V."/>
            <person name="Anthouard V."/>
            <person name="Rowen L."/>
            <person name="Madan A."/>
            <person name="Qin S."/>
            <person name="Sun H."/>
            <person name="Du H."/>
            <person name="Pepin K."/>
            <person name="Artiguenave F."/>
            <person name="Robert C."/>
            <person name="Cruaud C."/>
            <person name="Bruels T."/>
            <person name="Jaillon O."/>
            <person name="Friedlander L."/>
            <person name="Samson G."/>
            <person name="Brottier P."/>
            <person name="Cure S."/>
            <person name="Segurens B."/>
            <person name="Aniere F."/>
            <person name="Samain S."/>
            <person name="Crespeau H."/>
            <person name="Abbasi N."/>
            <person name="Aiach N."/>
            <person name="Boscus D."/>
            <person name="Dickhoff R."/>
            <person name="Dors M."/>
            <person name="Dubois I."/>
            <person name="Friedman C."/>
            <person name="Gouyvenoux M."/>
            <person name="James R."/>
            <person name="Madan A."/>
            <person name="Mairey-Estrada B."/>
            <person name="Mangenot S."/>
            <person name="Martins N."/>
            <person name="Menard M."/>
            <person name="Oztas S."/>
            <person name="Ratcliffe A."/>
            <person name="Shaffer T."/>
            <person name="Trask B."/>
            <person name="Vacherie B."/>
            <person name="Bellemere C."/>
            <person name="Belser C."/>
            <person name="Besnard-Gonnet M."/>
            <person name="Bartol-Mavel D."/>
            <person name="Boutard M."/>
            <person name="Briez-Silla S."/>
            <person name="Combette S."/>
            <person name="Dufosse-Laurent V."/>
            <person name="Ferron C."/>
            <person name="Lechaplais C."/>
            <person name="Louesse C."/>
            <person name="Muselet D."/>
            <person name="Magdelenat G."/>
            <person name="Pateau E."/>
            <person name="Petit E."/>
            <person name="Sirvain-Trukniewicz P."/>
            <person name="Trybou A."/>
            <person name="Vega-Czarny N."/>
            <person name="Bataille E."/>
            <person name="Bluet E."/>
            <person name="Bordelais I."/>
            <person name="Dubois M."/>
            <person name="Dumont C."/>
            <person name="Guerin T."/>
            <person name="Haffray S."/>
            <person name="Hammadi R."/>
            <person name="Muanga J."/>
            <person name="Pellouin V."/>
            <person name="Robert D."/>
            <person name="Wunderle E."/>
            <person name="Gauguet G."/>
            <person name="Roy A."/>
            <person name="Sainte-Marthe L."/>
            <person name="Verdier J."/>
            <person name="Verdier-Discala C."/>
            <person name="Hillier L.W."/>
            <person name="Fulton L."/>
            <person name="McPherson J."/>
            <person name="Matsuda F."/>
            <person name="Wilson R."/>
            <person name="Scarpelli C."/>
            <person name="Gyapay G."/>
            <person name="Wincker P."/>
            <person name="Saurin W."/>
            <person name="Quetier F."/>
            <person name="Waterston R."/>
            <person name="Hood L."/>
            <person name="Weissenbach J."/>
        </authorList>
    </citation>
    <scope>NUCLEOTIDE SEQUENCE [LARGE SCALE GENOMIC DNA]</scope>
</reference>
<reference key="7">
    <citation type="submission" date="2005-09" db="EMBL/GenBank/DDBJ databases">
        <authorList>
            <person name="Mural R.J."/>
            <person name="Istrail S."/>
            <person name="Sutton G.G."/>
            <person name="Florea L."/>
            <person name="Halpern A.L."/>
            <person name="Mobarry C.M."/>
            <person name="Lippert R."/>
            <person name="Walenz B."/>
            <person name="Shatkay H."/>
            <person name="Dew I."/>
            <person name="Miller J.R."/>
            <person name="Flanigan M.J."/>
            <person name="Edwards N.J."/>
            <person name="Bolanos R."/>
            <person name="Fasulo D."/>
            <person name="Halldorsson B.V."/>
            <person name="Hannenhalli S."/>
            <person name="Turner R."/>
            <person name="Yooseph S."/>
            <person name="Lu F."/>
            <person name="Nusskern D.R."/>
            <person name="Shue B.C."/>
            <person name="Zheng X.H."/>
            <person name="Zhong F."/>
            <person name="Delcher A.L."/>
            <person name="Huson D.H."/>
            <person name="Kravitz S.A."/>
            <person name="Mouchard L."/>
            <person name="Reinert K."/>
            <person name="Remington K.A."/>
            <person name="Clark A.G."/>
            <person name="Waterman M.S."/>
            <person name="Eichler E.E."/>
            <person name="Adams M.D."/>
            <person name="Hunkapiller M.W."/>
            <person name="Myers E.W."/>
            <person name="Venter J.C."/>
        </authorList>
    </citation>
    <scope>NUCLEOTIDE SEQUENCE [LARGE SCALE GENOMIC DNA]</scope>
</reference>
<reference key="8">
    <citation type="journal article" date="2004" name="Genome Res.">
        <title>The status, quality, and expansion of the NIH full-length cDNA project: the Mammalian Gene Collection (MGC).</title>
        <authorList>
            <consortium name="The MGC Project Team"/>
        </authorList>
    </citation>
    <scope>NUCLEOTIDE SEQUENCE [LARGE SCALE MRNA]</scope>
    <source>
        <tissue>Duodenum</tissue>
        <tissue>Hippocampus</tissue>
    </source>
</reference>
<reference key="9">
    <citation type="journal article" date="2006" name="Cell">
        <title>Global, in vivo, and site-specific phosphorylation dynamics in signaling networks.</title>
        <authorList>
            <person name="Olsen J.V."/>
            <person name="Blagoev B."/>
            <person name="Gnad F."/>
            <person name="Macek B."/>
            <person name="Kumar C."/>
            <person name="Mortensen P."/>
            <person name="Mann M."/>
        </authorList>
    </citation>
    <scope>PHOSPHORYLATION [LARGE SCALE ANALYSIS] AT SER-247</scope>
    <scope>IDENTIFICATION BY MASS SPECTROMETRY [LARGE SCALE ANALYSIS]</scope>
    <source>
        <tissue>Cervix carcinoma</tissue>
    </source>
</reference>
<reference key="10">
    <citation type="journal article" date="2008" name="J. Proteome Res.">
        <title>Phosphoproteome of resting human platelets.</title>
        <authorList>
            <person name="Zahedi R.P."/>
            <person name="Lewandrowski U."/>
            <person name="Wiesner J."/>
            <person name="Wortelkamp S."/>
            <person name="Moebius J."/>
            <person name="Schuetz C."/>
            <person name="Walter U."/>
            <person name="Gambaryan S."/>
            <person name="Sickmann A."/>
        </authorList>
    </citation>
    <scope>PHOSPHORYLATION [LARGE SCALE ANALYSIS] AT SER-247</scope>
    <scope>IDENTIFICATION BY MASS SPECTROMETRY [LARGE SCALE ANALYSIS]</scope>
    <source>
        <tissue>Platelet</tissue>
    </source>
</reference>
<reference key="11">
    <citation type="journal article" date="2008" name="Proc. Natl. Acad. Sci. U.S.A.">
        <title>A quantitative atlas of mitotic phosphorylation.</title>
        <authorList>
            <person name="Dephoure N."/>
            <person name="Zhou C."/>
            <person name="Villen J."/>
            <person name="Beausoleil S.A."/>
            <person name="Bakalarski C.E."/>
            <person name="Elledge S.J."/>
            <person name="Gygi S.P."/>
        </authorList>
    </citation>
    <scope>PHOSPHORYLATION [LARGE SCALE ANALYSIS] AT SER-247; SER-270 AND SER-280</scope>
    <scope>IDENTIFICATION BY MASS SPECTROMETRY [LARGE SCALE ANALYSIS]</scope>
    <source>
        <tissue>Cervix carcinoma</tissue>
    </source>
</reference>
<reference key="12">
    <citation type="journal article" date="2008" name="Proteomics">
        <title>Large-scale phosphoproteome analysis of human liver tissue by enrichment and fractionation of phosphopeptides with strong anion exchange chromatography.</title>
        <authorList>
            <person name="Han G."/>
            <person name="Ye M."/>
            <person name="Zhou H."/>
            <person name="Jiang X."/>
            <person name="Feng S."/>
            <person name="Jiang X."/>
            <person name="Tian R."/>
            <person name="Wan D."/>
            <person name="Zou H."/>
            <person name="Gu J."/>
        </authorList>
    </citation>
    <scope>PHOSPHORYLATION [LARGE SCALE ANALYSIS] AT SER-247</scope>
    <scope>IDENTIFICATION BY MASS SPECTROMETRY [LARGE SCALE ANALYSIS]</scope>
    <source>
        <tissue>Liver</tissue>
    </source>
</reference>
<reference key="13">
    <citation type="journal article" date="2009" name="Anal. Chem.">
        <title>Lys-N and trypsin cover complementary parts of the phosphoproteome in a refined SCX-based approach.</title>
        <authorList>
            <person name="Gauci S."/>
            <person name="Helbig A.O."/>
            <person name="Slijper M."/>
            <person name="Krijgsveld J."/>
            <person name="Heck A.J."/>
            <person name="Mohammed S."/>
        </authorList>
    </citation>
    <scope>IDENTIFICATION BY MASS SPECTROMETRY [LARGE SCALE ANALYSIS]</scope>
</reference>
<reference key="14">
    <citation type="journal article" date="2009" name="Mol. Cell. Proteomics">
        <title>Large-scale proteomics analysis of the human kinome.</title>
        <authorList>
            <person name="Oppermann F.S."/>
            <person name="Gnad F."/>
            <person name="Olsen J.V."/>
            <person name="Hornberger R."/>
            <person name="Greff Z."/>
            <person name="Keri G."/>
            <person name="Mann M."/>
            <person name="Daub H."/>
        </authorList>
    </citation>
    <scope>PHOSPHORYLATION [LARGE SCALE ANALYSIS] AT SER-247</scope>
    <scope>IDENTIFICATION BY MASS SPECTROMETRY [LARGE SCALE ANALYSIS]</scope>
</reference>
<reference key="15">
    <citation type="journal article" date="2009" name="Sci. Signal.">
        <title>Quantitative phosphoproteomic analysis of T cell receptor signaling reveals system-wide modulation of protein-protein interactions.</title>
        <authorList>
            <person name="Mayya V."/>
            <person name="Lundgren D.H."/>
            <person name="Hwang S.-I."/>
            <person name="Rezaul K."/>
            <person name="Wu L."/>
            <person name="Eng J.K."/>
            <person name="Rodionov V."/>
            <person name="Han D.K."/>
        </authorList>
    </citation>
    <scope>PHOSPHORYLATION [LARGE SCALE ANALYSIS] AT SER-247 AND SER-270</scope>
    <scope>IDENTIFICATION BY MASS SPECTROMETRY [LARGE SCALE ANALYSIS]</scope>
    <source>
        <tissue>Leukemic T-cell</tissue>
    </source>
</reference>
<reference key="16">
    <citation type="journal article" date="2010" name="Sci. Signal.">
        <title>Quantitative phosphoproteomics reveals widespread full phosphorylation site occupancy during mitosis.</title>
        <authorList>
            <person name="Olsen J.V."/>
            <person name="Vermeulen M."/>
            <person name="Santamaria A."/>
            <person name="Kumar C."/>
            <person name="Miller M.L."/>
            <person name="Jensen L.J."/>
            <person name="Gnad F."/>
            <person name="Cox J."/>
            <person name="Jensen T.S."/>
            <person name="Nigg E.A."/>
            <person name="Brunak S."/>
            <person name="Mann M."/>
        </authorList>
    </citation>
    <scope>PHOSPHORYLATION [LARGE SCALE ANALYSIS] AT SER-247; SER-270 AND SER-280</scope>
    <scope>IDENTIFICATION BY MASS SPECTROMETRY [LARGE SCALE ANALYSIS]</scope>
    <source>
        <tissue>Cervix carcinoma</tissue>
    </source>
</reference>
<reference key="17">
    <citation type="journal article" date="2011" name="BMC Syst. Biol.">
        <title>Initial characterization of the human central proteome.</title>
        <authorList>
            <person name="Burkard T.R."/>
            <person name="Planyavsky M."/>
            <person name="Kaupe I."/>
            <person name="Breitwieser F.P."/>
            <person name="Buerckstuemmer T."/>
            <person name="Bennett K.L."/>
            <person name="Superti-Furga G."/>
            <person name="Colinge J."/>
        </authorList>
    </citation>
    <scope>IDENTIFICATION BY MASS SPECTROMETRY [LARGE SCALE ANALYSIS]</scope>
</reference>
<reference key="18">
    <citation type="journal article" date="2011" name="Sci. Signal.">
        <title>System-wide temporal characterization of the proteome and phosphoproteome of human embryonic stem cell differentiation.</title>
        <authorList>
            <person name="Rigbolt K.T."/>
            <person name="Prokhorova T.A."/>
            <person name="Akimov V."/>
            <person name="Henningsen J."/>
            <person name="Johansen P.T."/>
            <person name="Kratchmarova I."/>
            <person name="Kassem M."/>
            <person name="Mann M."/>
            <person name="Olsen J.V."/>
            <person name="Blagoev B."/>
        </authorList>
    </citation>
    <scope>PHOSPHORYLATION [LARGE SCALE ANALYSIS] AT SER-247 AND SER-270</scope>
    <scope>IDENTIFICATION BY MASS SPECTROMETRY [LARGE SCALE ANALYSIS]</scope>
</reference>
<reference key="19">
    <citation type="journal article" date="2012" name="EMBO J.">
        <title>Palmitoylated TMX and calnexin target to the mitochondria-associated membrane.</title>
        <authorList>
            <person name="Lynes E.M."/>
            <person name="Bui M."/>
            <person name="Yap M.C."/>
            <person name="Benson M.D."/>
            <person name="Schneider B."/>
            <person name="Ellgaard L."/>
            <person name="Berthiaume L.G."/>
            <person name="Simmen T."/>
        </authorList>
    </citation>
    <scope>SUBCELLULAR LOCATION</scope>
    <scope>PALMITOYLATION AT CYS-205 AND CYS-207</scope>
    <scope>MUTAGENESIS OF 205-CYS--CYS-207</scope>
</reference>
<reference key="20">
    <citation type="journal article" date="2012" name="J. Biol. Chem.">
        <title>Reductive activation of type 2 ribosome-inactivating proteins is promoted by transmembrane thioredoxin-related protein.</title>
        <authorList>
            <person name="Pasetto M."/>
            <person name="Barison E."/>
            <person name="Castagna M."/>
            <person name="Della Cristina P."/>
            <person name="Anselmi C."/>
            <person name="Colombatti M."/>
        </authorList>
    </citation>
    <scope>FUNCTION</scope>
    <scope>CATALYTIC ACTIVITY</scope>
</reference>
<reference key="21">
    <citation type="journal article" date="2013" name="J. Proteome Res.">
        <title>Toward a comprehensive characterization of a human cancer cell phosphoproteome.</title>
        <authorList>
            <person name="Zhou H."/>
            <person name="Di Palma S."/>
            <person name="Preisinger C."/>
            <person name="Peng M."/>
            <person name="Polat A.N."/>
            <person name="Heck A.J."/>
            <person name="Mohammed S."/>
        </authorList>
    </citation>
    <scope>PHOSPHORYLATION [LARGE SCALE ANALYSIS] AT SER-228; SER-247; SER-270; SER-274 AND SER-280</scope>
    <scope>IDENTIFICATION BY MASS SPECTROMETRY [LARGE SCALE ANALYSIS]</scope>
    <source>
        <tissue>Cervix carcinoma</tissue>
        <tissue>Erythroleukemia</tissue>
    </source>
</reference>
<reference key="22">
    <citation type="journal article" date="2014" name="J. Proteomics">
        <title>An enzyme assisted RP-RPLC approach for in-depth analysis of human liver phosphoproteome.</title>
        <authorList>
            <person name="Bian Y."/>
            <person name="Song C."/>
            <person name="Cheng K."/>
            <person name="Dong M."/>
            <person name="Wang F."/>
            <person name="Huang J."/>
            <person name="Sun D."/>
            <person name="Wang L."/>
            <person name="Ye M."/>
            <person name="Zou H."/>
        </authorList>
    </citation>
    <scope>IDENTIFICATION BY MASS SPECTROMETRY [LARGE SCALE ANALYSIS]</scope>
    <source>
        <tissue>Liver</tissue>
    </source>
</reference>
<reference key="23">
    <citation type="journal article" date="2015" name="Proteomics">
        <title>N-terminome analysis of the human mitochondrial proteome.</title>
        <authorList>
            <person name="Vaca Jacome A.S."/>
            <person name="Rabilloud T."/>
            <person name="Schaeffer-Reiss C."/>
            <person name="Rompais M."/>
            <person name="Ayoub D."/>
            <person name="Lane L."/>
            <person name="Bairoch A."/>
            <person name="Van Dorsselaer A."/>
            <person name="Carapito C."/>
        </authorList>
    </citation>
    <scope>IDENTIFICATION BY MASS SPECTROMETRY [LARGE SCALE ANALYSIS]</scope>
</reference>
<reference key="24">
    <citation type="journal article" date="2016" name="J. Cell Biol.">
        <title>TMX1 determines cancer cell metabolism as a thiol-based modulator of ER-mitochondria Ca2+ flux.</title>
        <authorList>
            <person name="Raturi A."/>
            <person name="Gutierrez T."/>
            <person name="Ortiz-Sandoval C."/>
            <person name="Ruangkittisakul A."/>
            <person name="Herrera-Cruz M.S."/>
            <person name="Rockley J.P."/>
            <person name="Gesson K."/>
            <person name="Ourdev D."/>
            <person name="Lou P.H."/>
            <person name="Lucchinetti E."/>
            <person name="Tahbaz N."/>
            <person name="Zaugg M."/>
            <person name="Baksh S."/>
            <person name="Ballanyi K."/>
            <person name="Simmen T."/>
        </authorList>
    </citation>
    <scope>FUNCTION</scope>
    <scope>SUBCELLULAR LOCATION</scope>
    <scope>INTERACTION WITH ATP2A2</scope>
    <scope>PALMITOYLATION AT CYS-205 AND CYS-207</scope>
    <scope>MUTAGENESIS OF 205-CYS--CYS-207</scope>
</reference>
<reference key="25">
    <citation type="journal article" date="2018" name="Biochem. Biophys. Res. Commun.">
        <title>The reductase TMX1 contributes to ERAD by preferentially acting on membrane-associated folding-defective polypeptides.</title>
        <authorList>
            <person name="Guerra C."/>
            <person name="Brambilla Pisoni G."/>
            <person name="Solda T."/>
            <person name="Molinari M."/>
        </authorList>
    </citation>
    <scope>FUNCTION</scope>
    <scope>CATALYTIC ACTIVITY</scope>
</reference>
<reference key="26">
    <citation type="journal article" date="2019" name="Blood">
        <title>The transmembrane protein disulfide isomerase TMX1 negatively regulates platelet responses.</title>
        <authorList>
            <person name="Zhao Z."/>
            <person name="Wu Y."/>
            <person name="Zhou J."/>
            <person name="Chen F."/>
            <person name="Yang A."/>
            <person name="Essex D.W."/>
        </authorList>
    </citation>
    <scope>FUNCTION</scope>
    <scope>SUBCELLULAR LOCATION</scope>
</reference>
<reference key="27">
    <citation type="journal article" date="2019" name="EMBO J.">
        <title>Redox signals at the ER-mitochondria interface control melanoma progression.</title>
        <authorList>
            <person name="Zhang X."/>
            <person name="Gibhardt C.S."/>
            <person name="Will T."/>
            <person name="Stanisz H."/>
            <person name="Koerbel C."/>
            <person name="Mitkovski M."/>
            <person name="Stejerean I."/>
            <person name="Cappello S."/>
            <person name="Pacheu-Grau D."/>
            <person name="Dudek J."/>
            <person name="Tahbaz N."/>
            <person name="Mina L."/>
            <person name="Simmen T."/>
            <person name="Laschke M.W."/>
            <person name="Menger M.D."/>
            <person name="Schoen M.P."/>
            <person name="Helms V."/>
            <person name="Niemeyer B.A."/>
            <person name="Rehling P."/>
            <person name="Vultur A."/>
            <person name="Bogeski I."/>
        </authorList>
    </citation>
    <scope>FUNCTION</scope>
    <scope>SUBCELLULAR LOCATION</scope>
</reference>
<reference key="28">
    <citation type="journal article" date="2023" name="Nature">
        <title>Identification of an alternative triglyceride biosynthesis pathway.</title>
        <authorList>
            <person name="McLelland G.L."/>
            <person name="Lopez-Osias M."/>
            <person name="Verzijl C.R.C."/>
            <person name="Ellenbroek B.D."/>
            <person name="Oliveira R.A."/>
            <person name="Boon N.J."/>
            <person name="Dekker M."/>
            <person name="van den Hengel L.G."/>
            <person name="Ali R."/>
            <person name="Janssen H."/>
            <person name="Song J.Y."/>
            <person name="Krimpenfort P."/>
            <person name="van Zutphen T."/>
            <person name="Jonker J.W."/>
            <person name="Brummelkamp T.R."/>
        </authorList>
    </citation>
    <scope>FUNCTION</scope>
    <scope>ACTIVE SITES</scope>
    <scope>SUBCELLULAR LOCATION</scope>
    <scope>MUTAGENESIS OF CYS-56 AND CYS-59</scope>
</reference>
<reference key="29">
    <citation type="submission" date="2005-11" db="PDB data bank">
        <title>The solution structure of the thioredoxin-like domain of human thioredoxin-related transmembrane protein.</title>
        <authorList>
            <consortium name="RIKEN structural genomics initiative (RSGI)"/>
        </authorList>
    </citation>
    <scope>STRUCTURE BY NMR OF 30-142</scope>
</reference>
<evidence type="ECO:0000255" key="1"/>
<evidence type="ECO:0000255" key="2">
    <source>
        <dbReference type="PROSITE-ProRule" id="PRU00691"/>
    </source>
</evidence>
<evidence type="ECO:0000256" key="3">
    <source>
        <dbReference type="SAM" id="MobiDB-lite"/>
    </source>
</evidence>
<evidence type="ECO:0000269" key="4">
    <source>
    </source>
</evidence>
<evidence type="ECO:0000269" key="5">
    <source>
    </source>
</evidence>
<evidence type="ECO:0000269" key="6">
    <source>
    </source>
</evidence>
<evidence type="ECO:0000269" key="7">
    <source>
    </source>
</evidence>
<evidence type="ECO:0000269" key="8">
    <source>
    </source>
</evidence>
<evidence type="ECO:0000269" key="9">
    <source>
    </source>
</evidence>
<evidence type="ECO:0000269" key="10">
    <source>
    </source>
</evidence>
<evidence type="ECO:0000269" key="11">
    <source>
    </source>
</evidence>
<evidence type="ECO:0000303" key="12">
    <source>
    </source>
</evidence>
<evidence type="ECO:0000303" key="13">
    <source>
    </source>
</evidence>
<evidence type="ECO:0000303" key="14">
    <source ref="29"/>
</evidence>
<evidence type="ECO:0000305" key="15"/>
<evidence type="ECO:0000305" key="16">
    <source>
    </source>
</evidence>
<evidence type="ECO:0000305" key="17">
    <source>
    </source>
</evidence>
<evidence type="ECO:0000305" key="18">
    <source>
    </source>
</evidence>
<evidence type="ECO:0000312" key="19">
    <source>
        <dbReference type="HGNC" id="HGNC:15487"/>
    </source>
</evidence>
<evidence type="ECO:0007744" key="20">
    <source>
    </source>
</evidence>
<evidence type="ECO:0007744" key="21">
    <source>
    </source>
</evidence>
<evidence type="ECO:0007744" key="22">
    <source>
    </source>
</evidence>
<evidence type="ECO:0007744" key="23">
    <source>
    </source>
</evidence>
<evidence type="ECO:0007744" key="24">
    <source>
    </source>
</evidence>
<evidence type="ECO:0007744" key="25">
    <source>
    </source>
</evidence>
<evidence type="ECO:0007744" key="26">
    <source>
    </source>
</evidence>
<evidence type="ECO:0007744" key="27">
    <source>
    </source>
</evidence>
<evidence type="ECO:0007744" key="28">
    <source>
    </source>
</evidence>
<evidence type="ECO:0007829" key="29">
    <source>
        <dbReference type="PDB" id="1X5E"/>
    </source>
</evidence>
<sequence length="280" mass="31791">MAPSGSLAVPLAVLVLLLWGAPWTHGRRSNVRVITDENWRELLEGDWMIEFYAPWCPACQNLQPEWESFAEWGEDLEVNIAKVDVTEQPGLSGRFIITALPTIYHCKDGEFRRYQGPRTKKDFINFISDKEWKSIEPVSSWFGPGSVLMSSMSALFQLSMWIRTCHNYFIEDLGLPVWGSYTVFALATLFSGLLLGLCMIFVADCLCPSKRRRPQPYPYPSKKLLSESAQPLKKVEEEQEADEEDVSEEEAESKEGTNKDFPQNAIRQRSLGPSLATDKS</sequence>
<keyword id="KW-0002">3D-structure</keyword>
<keyword id="KW-1015">Disulfide bond</keyword>
<keyword id="KW-0249">Electron transport</keyword>
<keyword id="KW-0256">Endoplasmic reticulum</keyword>
<keyword id="KW-0413">Isomerase</keyword>
<keyword id="KW-0449">Lipoprotein</keyword>
<keyword id="KW-0472">Membrane</keyword>
<keyword id="KW-0496">Mitochondrion</keyword>
<keyword id="KW-0564">Palmitate</keyword>
<keyword id="KW-0597">Phosphoprotein</keyword>
<keyword id="KW-1267">Proteomics identification</keyword>
<keyword id="KW-0676">Redox-active center</keyword>
<keyword id="KW-1185">Reference proteome</keyword>
<keyword id="KW-0964">Secreted</keyword>
<keyword id="KW-0732">Signal</keyword>
<keyword id="KW-0812">Transmembrane</keyword>
<keyword id="KW-1133">Transmembrane helix</keyword>
<keyword id="KW-0813">Transport</keyword>
<name>TMX1_HUMAN</name>